<comment type="function">
    <text evidence="2">May regulate immune response to the intracellular capsid in acting as a T-cell tolerogen, by having an immunoregulatory effect which prevents destruction of infected cells by cytotoxic T-cells. This immune regulation may predispose to chronicity during perinatal infections and prevent severe liver injury during adult infections.</text>
</comment>
<comment type="subunit">
    <text evidence="2">Homodimerizes.</text>
</comment>
<comment type="subcellular location">
    <subcellularLocation>
        <location evidence="2">Secreted</location>
    </subcellularLocation>
    <subcellularLocation>
        <location evidence="2">Host nucleus</location>
    </subcellularLocation>
</comment>
<comment type="alternative products">
    <event type="alternative initiation"/>
    <isoform>
        <id>P0C6J0-1</id>
        <name>External core antigen</name>
        <sequence type="displayed"/>
    </isoform>
    <isoform>
        <id>O71303-1</id>
        <name>Capsid protein</name>
        <sequence type="external"/>
    </isoform>
</comment>
<comment type="PTM">
    <text evidence="2">Phosphorylated.</text>
</comment>
<comment type="PTM">
    <text evidence="2">Cleaved by host furin.</text>
</comment>
<comment type="similarity">
    <text evidence="2">Belongs to the orthohepadnavirus precore antigen family.</text>
</comment>
<protein>
    <recommendedName>
        <fullName evidence="2">External core antigen</fullName>
    </recommendedName>
    <alternativeName>
        <fullName evidence="2">HBeAg</fullName>
    </alternativeName>
    <alternativeName>
        <fullName evidence="2">Precore protein</fullName>
    </alternativeName>
    <alternativeName>
        <fullName evidence="2">p25</fullName>
    </alternativeName>
</protein>
<keyword id="KW-0024">Alternative initiation</keyword>
<keyword id="KW-1015">Disulfide bond</keyword>
<keyword id="KW-1048">Host nucleus</keyword>
<keyword id="KW-0945">Host-virus interaction</keyword>
<keyword id="KW-0677">Repeat</keyword>
<keyword id="KW-0964">Secreted</keyword>
<keyword id="KW-0732">Signal</keyword>
<keyword id="KW-0899">Viral immunoevasion</keyword>
<reference key="1">
    <citation type="journal article" date="1998" name="Proc. Natl. Acad. Sci. U.S.A.">
        <title>Isolation of a hepadnavirus from the woolly monkey, a New World primate.</title>
        <authorList>
            <person name="Lanford R.E."/>
            <person name="Chavez D."/>
            <person name="Brasky K.M."/>
            <person name="Burns R.B. III"/>
            <person name="Rico-Hesse R."/>
        </authorList>
    </citation>
    <scope>NUCLEOTIDE SEQUENCE [GENOMIC DNA]</scope>
</reference>
<feature type="signal peptide" evidence="2">
    <location>
        <begin position="1"/>
        <end position="19"/>
    </location>
</feature>
<feature type="chain" id="PRO_0000324750" description="External core antigen" evidence="2">
    <location>
        <begin position="20"/>
        <end position="211"/>
    </location>
</feature>
<feature type="propeptide" id="PRO_0000324751" evidence="1">
    <location>
        <begin position="183"/>
        <end position="211"/>
    </location>
</feature>
<feature type="repeat" description="1; half-length">
    <location>
        <begin position="183"/>
        <end position="189"/>
    </location>
</feature>
<feature type="repeat" description="2">
    <location>
        <begin position="190"/>
        <end position="197"/>
    </location>
</feature>
<feature type="repeat" description="3">
    <location>
        <begin position="198"/>
        <end position="205"/>
    </location>
</feature>
<feature type="region of interest" description="HBEAG" evidence="2">
    <location>
        <begin position="25"/>
        <end position="27"/>
    </location>
</feature>
<feature type="region of interest" description="Disordered" evidence="3">
    <location>
        <begin position="165"/>
        <end position="211"/>
    </location>
</feature>
<feature type="region of interest" description="3 X 8 AA repeats of S-P-R-R-R-R-S-Q">
    <location>
        <begin position="183"/>
        <end position="205"/>
    </location>
</feature>
<feature type="compositionally biased region" description="Basic residues" evidence="3">
    <location>
        <begin position="178"/>
        <end position="204"/>
    </location>
</feature>
<feature type="disulfide bond" description="Interchain" evidence="2">
    <location>
        <position position="77"/>
    </location>
</feature>
<feature type="disulfide bond" description="Interchain" evidence="2">
    <location>
        <position position="90"/>
    </location>
</feature>
<organism>
    <name type="scientific">Woolly monkey hepatitis B virus (isolate Louisville)</name>
    <name type="common">WMHBV</name>
    <dbReference type="NCBI Taxonomy" id="490134"/>
    <lineage>
        <taxon>Viruses</taxon>
        <taxon>Riboviria</taxon>
        <taxon>Pararnavirae</taxon>
        <taxon>Artverviricota</taxon>
        <taxon>Revtraviricetes</taxon>
        <taxon>Blubervirales</taxon>
        <taxon>Hepadnaviridae</taxon>
        <taxon>Orthohepadnavirus</taxon>
        <taxon>Woolly monkey hepatitis B virus</taxon>
    </lineage>
</organism>
<name>HBEAG_WMHBV</name>
<proteinExistence type="inferred from homology"/>
<evidence type="ECO:0000250" key="1"/>
<evidence type="ECO:0000255" key="2">
    <source>
        <dbReference type="HAMAP-Rule" id="MF_04076"/>
    </source>
</evidence>
<evidence type="ECO:0000256" key="3">
    <source>
        <dbReference type="SAM" id="MobiDB-lite"/>
    </source>
</evidence>
<organismHost>
    <name type="scientific">Lagothrix lagotricha</name>
    <name type="common">Brown woolly monkey</name>
    <name type="synonym">Humboldt's woolly monkey</name>
    <dbReference type="NCBI Taxonomy" id="9519"/>
</organismHost>
<dbReference type="EMBL" id="AF046996">
    <property type="status" value="NOT_ANNOTATED_CDS"/>
    <property type="molecule type" value="Genomic_DNA"/>
</dbReference>
<dbReference type="SMR" id="P0C6J0"/>
<dbReference type="Proteomes" id="UP000008599">
    <property type="component" value="Segment"/>
</dbReference>
<dbReference type="GO" id="GO:0005576">
    <property type="term" value="C:extracellular region"/>
    <property type="evidence" value="ECO:0007669"/>
    <property type="project" value="UniProtKB-SubCell"/>
</dbReference>
<dbReference type="GO" id="GO:0043657">
    <property type="term" value="C:host cell"/>
    <property type="evidence" value="ECO:0007669"/>
    <property type="project" value="GOC"/>
</dbReference>
<dbReference type="GO" id="GO:0030430">
    <property type="term" value="C:host cell cytoplasm"/>
    <property type="evidence" value="ECO:0007669"/>
    <property type="project" value="UniProtKB-UniRule"/>
</dbReference>
<dbReference type="GO" id="GO:0042025">
    <property type="term" value="C:host cell nucleus"/>
    <property type="evidence" value="ECO:0007669"/>
    <property type="project" value="UniProtKB-SubCell"/>
</dbReference>
<dbReference type="GO" id="GO:0039619">
    <property type="term" value="C:T=4 icosahedral viral capsid"/>
    <property type="evidence" value="ECO:0007669"/>
    <property type="project" value="UniProtKB-UniRule"/>
</dbReference>
<dbReference type="GO" id="GO:0003677">
    <property type="term" value="F:DNA binding"/>
    <property type="evidence" value="ECO:0007669"/>
    <property type="project" value="UniProtKB-UniRule"/>
</dbReference>
<dbReference type="GO" id="GO:0003723">
    <property type="term" value="F:RNA binding"/>
    <property type="evidence" value="ECO:0007669"/>
    <property type="project" value="UniProtKB-UniRule"/>
</dbReference>
<dbReference type="GO" id="GO:0005198">
    <property type="term" value="F:structural molecule activity"/>
    <property type="evidence" value="ECO:0007669"/>
    <property type="project" value="UniProtKB-UniRule"/>
</dbReference>
<dbReference type="GO" id="GO:0075521">
    <property type="term" value="P:microtubule-dependent intracellular transport of viral material towards nucleus"/>
    <property type="evidence" value="ECO:0007669"/>
    <property type="project" value="UniProtKB-UniRule"/>
</dbReference>
<dbReference type="GO" id="GO:0046718">
    <property type="term" value="P:symbiont entry into host cell"/>
    <property type="evidence" value="ECO:0007669"/>
    <property type="project" value="UniProtKB-UniRule"/>
</dbReference>
<dbReference type="GO" id="GO:0075732">
    <property type="term" value="P:viral penetration into host nucleus"/>
    <property type="evidence" value="ECO:0007669"/>
    <property type="project" value="UniProtKB-UniRule"/>
</dbReference>
<dbReference type="FunFam" id="1.10.4090.10:FF:000001">
    <property type="entry name" value="Capsid protein"/>
    <property type="match status" value="1"/>
</dbReference>
<dbReference type="Gene3D" id="1.10.4090.10">
    <property type="entry name" value="Viral capsid, core domain supefamily, Hepatitis B virus"/>
    <property type="match status" value="1"/>
</dbReference>
<dbReference type="HAMAP" id="MF_04076">
    <property type="entry name" value="HBV_HBEAG"/>
    <property type="match status" value="1"/>
</dbReference>
<dbReference type="InterPro" id="IPR013195">
    <property type="entry name" value="Hepatitis_B_virus_capsid_N"/>
</dbReference>
<dbReference type="InterPro" id="IPR002006">
    <property type="entry name" value="Hepatitis_core"/>
</dbReference>
<dbReference type="InterPro" id="IPR036459">
    <property type="entry name" value="Viral_capsid_core_dom_sf_HBV"/>
</dbReference>
<dbReference type="Pfam" id="PF08290">
    <property type="entry name" value="Hep_core_N"/>
    <property type="match status" value="1"/>
</dbReference>
<dbReference type="Pfam" id="PF00906">
    <property type="entry name" value="Hepatitis_core"/>
    <property type="match status" value="3"/>
</dbReference>
<dbReference type="SUPFAM" id="SSF47852">
    <property type="entry name" value="Hepatitis B viral capsid (hbcag)"/>
    <property type="match status" value="1"/>
</dbReference>
<gene>
    <name evidence="2" type="primary">C</name>
</gene>
<sequence>MHLFHLCLIILCSCPTVQASKLCLGWLLGMDIDPYKEFGATVELLSFLPADFFPSVRDLLDTASALYREALESSDHCSPHHTALRQTVLCWGELMSLASWVGTNLEDPAARELVVSYVNDNMGLKVRQLLWFHISCLTFGRETVLEYLVSFWVWIRTPPAYRPPNAPILSTLPETTVVRRRRPSGRRTPSPRRRRSQSPRRRRSQSPASSC</sequence>
<accession>P0C6J0</accession>